<keyword id="KW-0002">3D-structure</keyword>
<keyword id="KW-0240">DNA-directed RNA polymerase</keyword>
<keyword id="KW-0460">Magnesium</keyword>
<keyword id="KW-0479">Metal-binding</keyword>
<keyword id="KW-0548">Nucleotidyltransferase</keyword>
<keyword id="KW-1185">Reference proteome</keyword>
<keyword id="KW-0804">Transcription</keyword>
<keyword id="KW-0808">Transferase</keyword>
<keyword id="KW-0862">Zinc</keyword>
<comment type="function">
    <text evidence="1">DNA-dependent RNA polymerase catalyzes the transcription of DNA into RNA using the four ribonucleoside triphosphates as substrates.</text>
</comment>
<comment type="catalytic activity">
    <reaction evidence="1">
        <text>RNA(n) + a ribonucleoside 5'-triphosphate = RNA(n+1) + diphosphate</text>
        <dbReference type="Rhea" id="RHEA:21248"/>
        <dbReference type="Rhea" id="RHEA-COMP:14527"/>
        <dbReference type="Rhea" id="RHEA-COMP:17342"/>
        <dbReference type="ChEBI" id="CHEBI:33019"/>
        <dbReference type="ChEBI" id="CHEBI:61557"/>
        <dbReference type="ChEBI" id="CHEBI:140395"/>
        <dbReference type="EC" id="2.7.7.6"/>
    </reaction>
</comment>
<comment type="cofactor">
    <cofactor evidence="1">
        <name>Mg(2+)</name>
        <dbReference type="ChEBI" id="CHEBI:18420"/>
    </cofactor>
    <text evidence="1">Binds 1 Mg(2+) ion per subunit.</text>
</comment>
<comment type="cofactor">
    <cofactor evidence="1">
        <name>Zn(2+)</name>
        <dbReference type="ChEBI" id="CHEBI:29105"/>
    </cofactor>
    <text evidence="1">Binds 2 Zn(2+) ions per subunit.</text>
</comment>
<comment type="subunit">
    <text evidence="1">The RNAP catalytic core consists of 2 alpha, 1 beta, 1 beta' and 1 omega subunit. When a sigma factor is associated with the core the holoenzyme is formed, which can initiate transcription.</text>
</comment>
<comment type="similarity">
    <text evidence="1">Belongs to the RNA polymerase beta' chain family.</text>
</comment>
<protein>
    <recommendedName>
        <fullName evidence="1">DNA-directed RNA polymerase subunit beta'</fullName>
        <shortName evidence="1">RNAP subunit beta'</shortName>
        <ecNumber evidence="1">2.7.7.6</ecNumber>
    </recommendedName>
    <alternativeName>
        <fullName evidence="1">RNA polymerase subunit beta'</fullName>
    </alternativeName>
    <alternativeName>
        <fullName evidence="1">Transcriptase subunit beta'</fullName>
    </alternativeName>
</protein>
<name>RPOC_PSEAE</name>
<organism>
    <name type="scientific">Pseudomonas aeruginosa (strain ATCC 15692 / DSM 22644 / CIP 104116 / JCM 14847 / LMG 12228 / 1C / PRS 101 / PAO1)</name>
    <dbReference type="NCBI Taxonomy" id="208964"/>
    <lineage>
        <taxon>Bacteria</taxon>
        <taxon>Pseudomonadati</taxon>
        <taxon>Pseudomonadota</taxon>
        <taxon>Gammaproteobacteria</taxon>
        <taxon>Pseudomonadales</taxon>
        <taxon>Pseudomonadaceae</taxon>
        <taxon>Pseudomonas</taxon>
    </lineage>
</organism>
<accession>Q9HWC9</accession>
<dbReference type="EC" id="2.7.7.6" evidence="1"/>
<dbReference type="EMBL" id="AE004091">
    <property type="protein sequence ID" value="AAG07657.1"/>
    <property type="molecule type" value="Genomic_DNA"/>
</dbReference>
<dbReference type="PIR" id="G83112">
    <property type="entry name" value="G83112"/>
</dbReference>
<dbReference type="RefSeq" id="NP_252959.1">
    <property type="nucleotide sequence ID" value="NC_002516.2"/>
</dbReference>
<dbReference type="RefSeq" id="WP_003093745.1">
    <property type="nucleotide sequence ID" value="NZ_QZGE01000028.1"/>
</dbReference>
<dbReference type="PDB" id="7F0R">
    <property type="method" value="EM"/>
    <property type="resolution" value="5.80 A"/>
    <property type="chains" value="D=2-1399"/>
</dbReference>
<dbReference type="PDB" id="7VF9">
    <property type="method" value="EM"/>
    <property type="resolution" value="4.04 A"/>
    <property type="chains" value="D=2-1399"/>
</dbReference>
<dbReference type="PDB" id="7XL3">
    <property type="method" value="EM"/>
    <property type="resolution" value="3.13 A"/>
    <property type="chains" value="D=2-1399"/>
</dbReference>
<dbReference type="PDB" id="7XL4">
    <property type="method" value="EM"/>
    <property type="resolution" value="3.86 A"/>
    <property type="chains" value="D=2-1399"/>
</dbReference>
<dbReference type="PDB" id="7XYA">
    <property type="method" value="EM"/>
    <property type="resolution" value="3.30 A"/>
    <property type="chains" value="D=1-1399"/>
</dbReference>
<dbReference type="PDB" id="7XYB">
    <property type="method" value="EM"/>
    <property type="resolution" value="3.70 A"/>
    <property type="chains" value="D=1-1399"/>
</dbReference>
<dbReference type="PDBsum" id="7F0R"/>
<dbReference type="PDBsum" id="7VF9"/>
<dbReference type="PDBsum" id="7XL3"/>
<dbReference type="PDBsum" id="7XL4"/>
<dbReference type="PDBsum" id="7XYA"/>
<dbReference type="PDBsum" id="7XYB"/>
<dbReference type="EMDB" id="EMD-31403"/>
<dbReference type="EMDB" id="EMD-31948"/>
<dbReference type="EMDB" id="EMD-33271"/>
<dbReference type="EMDB" id="EMD-33272"/>
<dbReference type="EMDB" id="EMD-33515"/>
<dbReference type="EMDB" id="EMD-33516"/>
<dbReference type="SMR" id="Q9HWC9"/>
<dbReference type="FunCoup" id="Q9HWC9">
    <property type="interactions" value="773"/>
</dbReference>
<dbReference type="STRING" id="208964.PA4269"/>
<dbReference type="PaxDb" id="208964-PA4269"/>
<dbReference type="GeneID" id="881710"/>
<dbReference type="KEGG" id="pae:PA4269"/>
<dbReference type="PATRIC" id="fig|208964.12.peg.4470"/>
<dbReference type="PseudoCAP" id="PA4269"/>
<dbReference type="HOGENOM" id="CLU_000524_3_1_6"/>
<dbReference type="InParanoid" id="Q9HWC9"/>
<dbReference type="OrthoDB" id="9815296at2"/>
<dbReference type="PhylomeDB" id="Q9HWC9"/>
<dbReference type="BioCyc" id="PAER208964:G1FZ6-4342-MONOMER"/>
<dbReference type="Proteomes" id="UP000002438">
    <property type="component" value="Chromosome"/>
</dbReference>
<dbReference type="GO" id="GO:0000428">
    <property type="term" value="C:DNA-directed RNA polymerase complex"/>
    <property type="evidence" value="ECO:0007669"/>
    <property type="project" value="UniProtKB-KW"/>
</dbReference>
<dbReference type="GO" id="GO:0003677">
    <property type="term" value="F:DNA binding"/>
    <property type="evidence" value="ECO:0007669"/>
    <property type="project" value="UniProtKB-UniRule"/>
</dbReference>
<dbReference type="GO" id="GO:0003899">
    <property type="term" value="F:DNA-directed RNA polymerase activity"/>
    <property type="evidence" value="ECO:0007669"/>
    <property type="project" value="UniProtKB-UniRule"/>
</dbReference>
<dbReference type="GO" id="GO:0000287">
    <property type="term" value="F:magnesium ion binding"/>
    <property type="evidence" value="ECO:0007669"/>
    <property type="project" value="UniProtKB-UniRule"/>
</dbReference>
<dbReference type="GO" id="GO:0008270">
    <property type="term" value="F:zinc ion binding"/>
    <property type="evidence" value="ECO:0007669"/>
    <property type="project" value="UniProtKB-UniRule"/>
</dbReference>
<dbReference type="GO" id="GO:0006351">
    <property type="term" value="P:DNA-templated transcription"/>
    <property type="evidence" value="ECO:0007669"/>
    <property type="project" value="UniProtKB-UniRule"/>
</dbReference>
<dbReference type="CDD" id="cd02655">
    <property type="entry name" value="RNAP_beta'_C"/>
    <property type="match status" value="1"/>
</dbReference>
<dbReference type="CDD" id="cd01609">
    <property type="entry name" value="RNAP_beta'_N"/>
    <property type="match status" value="1"/>
</dbReference>
<dbReference type="FunFam" id="1.10.132.30:FF:000003">
    <property type="entry name" value="DNA-directed RNA polymerase subunit beta"/>
    <property type="match status" value="1"/>
</dbReference>
<dbReference type="FunFam" id="1.10.150.390:FF:000002">
    <property type="entry name" value="DNA-directed RNA polymerase subunit beta"/>
    <property type="match status" value="1"/>
</dbReference>
<dbReference type="FunFam" id="1.10.40.90:FF:000001">
    <property type="entry name" value="DNA-directed RNA polymerase subunit beta"/>
    <property type="match status" value="1"/>
</dbReference>
<dbReference type="FunFam" id="4.10.860.120:FF:000001">
    <property type="entry name" value="DNA-directed RNA polymerase subunit beta"/>
    <property type="match status" value="1"/>
</dbReference>
<dbReference type="Gene3D" id="1.10.132.30">
    <property type="match status" value="1"/>
</dbReference>
<dbReference type="Gene3D" id="1.10.150.390">
    <property type="match status" value="1"/>
</dbReference>
<dbReference type="Gene3D" id="1.10.1790.20">
    <property type="match status" value="1"/>
</dbReference>
<dbReference type="Gene3D" id="1.10.40.90">
    <property type="match status" value="1"/>
</dbReference>
<dbReference type="Gene3D" id="2.40.40.20">
    <property type="match status" value="1"/>
</dbReference>
<dbReference type="Gene3D" id="2.40.50.100">
    <property type="match status" value="3"/>
</dbReference>
<dbReference type="Gene3D" id="4.10.860.120">
    <property type="entry name" value="RNA polymerase II, clamp domain"/>
    <property type="match status" value="1"/>
</dbReference>
<dbReference type="Gene3D" id="1.10.274.100">
    <property type="entry name" value="RNA polymerase Rpb1, domain 3"/>
    <property type="match status" value="1"/>
</dbReference>
<dbReference type="HAMAP" id="MF_01322">
    <property type="entry name" value="RNApol_bact_RpoC"/>
    <property type="match status" value="1"/>
</dbReference>
<dbReference type="InterPro" id="IPR045867">
    <property type="entry name" value="DNA-dir_RpoC_beta_prime"/>
</dbReference>
<dbReference type="InterPro" id="IPR012754">
    <property type="entry name" value="DNA-dir_RpoC_beta_prime_bact"/>
</dbReference>
<dbReference type="InterPro" id="IPR000722">
    <property type="entry name" value="RNA_pol_asu"/>
</dbReference>
<dbReference type="InterPro" id="IPR006592">
    <property type="entry name" value="RNA_pol_N"/>
</dbReference>
<dbReference type="InterPro" id="IPR007080">
    <property type="entry name" value="RNA_pol_Rpb1_1"/>
</dbReference>
<dbReference type="InterPro" id="IPR007066">
    <property type="entry name" value="RNA_pol_Rpb1_3"/>
</dbReference>
<dbReference type="InterPro" id="IPR042102">
    <property type="entry name" value="RNA_pol_Rpb1_3_sf"/>
</dbReference>
<dbReference type="InterPro" id="IPR007083">
    <property type="entry name" value="RNA_pol_Rpb1_4"/>
</dbReference>
<dbReference type="InterPro" id="IPR007081">
    <property type="entry name" value="RNA_pol_Rpb1_5"/>
</dbReference>
<dbReference type="InterPro" id="IPR044893">
    <property type="entry name" value="RNA_pol_Rpb1_clamp_domain"/>
</dbReference>
<dbReference type="InterPro" id="IPR038120">
    <property type="entry name" value="Rpb1_funnel_sf"/>
</dbReference>
<dbReference type="NCBIfam" id="TIGR02386">
    <property type="entry name" value="rpoC_TIGR"/>
    <property type="match status" value="1"/>
</dbReference>
<dbReference type="PANTHER" id="PTHR19376">
    <property type="entry name" value="DNA-DIRECTED RNA POLYMERASE"/>
    <property type="match status" value="1"/>
</dbReference>
<dbReference type="PANTHER" id="PTHR19376:SF54">
    <property type="entry name" value="DNA-DIRECTED RNA POLYMERASE SUBUNIT BETA"/>
    <property type="match status" value="1"/>
</dbReference>
<dbReference type="Pfam" id="PF04997">
    <property type="entry name" value="RNA_pol_Rpb1_1"/>
    <property type="match status" value="1"/>
</dbReference>
<dbReference type="Pfam" id="PF00623">
    <property type="entry name" value="RNA_pol_Rpb1_2"/>
    <property type="match status" value="2"/>
</dbReference>
<dbReference type="Pfam" id="PF04983">
    <property type="entry name" value="RNA_pol_Rpb1_3"/>
    <property type="match status" value="1"/>
</dbReference>
<dbReference type="Pfam" id="PF05000">
    <property type="entry name" value="RNA_pol_Rpb1_4"/>
    <property type="match status" value="1"/>
</dbReference>
<dbReference type="Pfam" id="PF04998">
    <property type="entry name" value="RNA_pol_Rpb1_5"/>
    <property type="match status" value="1"/>
</dbReference>
<dbReference type="SMART" id="SM00663">
    <property type="entry name" value="RPOLA_N"/>
    <property type="match status" value="1"/>
</dbReference>
<dbReference type="SUPFAM" id="SSF64484">
    <property type="entry name" value="beta and beta-prime subunits of DNA dependent RNA-polymerase"/>
    <property type="match status" value="1"/>
</dbReference>
<reference key="1">
    <citation type="journal article" date="2000" name="Nature">
        <title>Complete genome sequence of Pseudomonas aeruginosa PAO1, an opportunistic pathogen.</title>
        <authorList>
            <person name="Stover C.K."/>
            <person name="Pham X.-Q.T."/>
            <person name="Erwin A.L."/>
            <person name="Mizoguchi S.D."/>
            <person name="Warrener P."/>
            <person name="Hickey M.J."/>
            <person name="Brinkman F.S.L."/>
            <person name="Hufnagle W.O."/>
            <person name="Kowalik D.J."/>
            <person name="Lagrou M."/>
            <person name="Garber R.L."/>
            <person name="Goltry L."/>
            <person name="Tolentino E."/>
            <person name="Westbrock-Wadman S."/>
            <person name="Yuan Y."/>
            <person name="Brody L.L."/>
            <person name="Coulter S.N."/>
            <person name="Folger K.R."/>
            <person name="Kas A."/>
            <person name="Larbig K."/>
            <person name="Lim R.M."/>
            <person name="Smith K.A."/>
            <person name="Spencer D.H."/>
            <person name="Wong G.K.-S."/>
            <person name="Wu Z."/>
            <person name="Paulsen I.T."/>
            <person name="Reizer J."/>
            <person name="Saier M.H. Jr."/>
            <person name="Hancock R.E.W."/>
            <person name="Lory S."/>
            <person name="Olson M.V."/>
        </authorList>
    </citation>
    <scope>NUCLEOTIDE SEQUENCE [LARGE SCALE GENOMIC DNA]</scope>
    <source>
        <strain>ATCC 15692 / DSM 22644 / CIP 104116 / JCM 14847 / LMG 12228 / 1C / PRS 101 / PAO1</strain>
    </source>
</reference>
<proteinExistence type="evidence at protein level"/>
<evidence type="ECO:0000255" key="1">
    <source>
        <dbReference type="HAMAP-Rule" id="MF_01322"/>
    </source>
</evidence>
<evidence type="ECO:0000256" key="2">
    <source>
        <dbReference type="SAM" id="MobiDB-lite"/>
    </source>
</evidence>
<evidence type="ECO:0007829" key="3">
    <source>
        <dbReference type="PDB" id="7XL3"/>
    </source>
</evidence>
<evidence type="ECO:0007829" key="4">
    <source>
        <dbReference type="PDB" id="7XYA"/>
    </source>
</evidence>
<feature type="chain" id="PRO_0000067777" description="DNA-directed RNA polymerase subunit beta'">
    <location>
        <begin position="1"/>
        <end position="1399"/>
    </location>
</feature>
<feature type="region of interest" description="Disordered" evidence="2">
    <location>
        <begin position="1367"/>
        <end position="1399"/>
    </location>
</feature>
<feature type="compositionally biased region" description="Low complexity" evidence="2">
    <location>
        <begin position="1382"/>
        <end position="1399"/>
    </location>
</feature>
<feature type="binding site" evidence="1">
    <location>
        <position position="70"/>
    </location>
    <ligand>
        <name>Zn(2+)</name>
        <dbReference type="ChEBI" id="CHEBI:29105"/>
        <label>1</label>
    </ligand>
</feature>
<feature type="binding site" evidence="1">
    <location>
        <position position="72"/>
    </location>
    <ligand>
        <name>Zn(2+)</name>
        <dbReference type="ChEBI" id="CHEBI:29105"/>
        <label>1</label>
    </ligand>
</feature>
<feature type="binding site" evidence="1">
    <location>
        <position position="85"/>
    </location>
    <ligand>
        <name>Zn(2+)</name>
        <dbReference type="ChEBI" id="CHEBI:29105"/>
        <label>1</label>
    </ligand>
</feature>
<feature type="binding site" evidence="1">
    <location>
        <position position="88"/>
    </location>
    <ligand>
        <name>Zn(2+)</name>
        <dbReference type="ChEBI" id="CHEBI:29105"/>
        <label>1</label>
    </ligand>
</feature>
<feature type="binding site" evidence="1">
    <location>
        <position position="460"/>
    </location>
    <ligand>
        <name>Mg(2+)</name>
        <dbReference type="ChEBI" id="CHEBI:18420"/>
    </ligand>
</feature>
<feature type="binding site" evidence="1">
    <location>
        <position position="462"/>
    </location>
    <ligand>
        <name>Mg(2+)</name>
        <dbReference type="ChEBI" id="CHEBI:18420"/>
    </ligand>
</feature>
<feature type="binding site" evidence="1">
    <location>
        <position position="464"/>
    </location>
    <ligand>
        <name>Mg(2+)</name>
        <dbReference type="ChEBI" id="CHEBI:18420"/>
    </ligand>
</feature>
<feature type="binding site" evidence="1">
    <location>
        <position position="814"/>
    </location>
    <ligand>
        <name>Zn(2+)</name>
        <dbReference type="ChEBI" id="CHEBI:29105"/>
        <label>2</label>
    </ligand>
</feature>
<feature type="binding site" evidence="1">
    <location>
        <position position="888"/>
    </location>
    <ligand>
        <name>Zn(2+)</name>
        <dbReference type="ChEBI" id="CHEBI:29105"/>
        <label>2</label>
    </ligand>
</feature>
<feature type="binding site" evidence="1">
    <location>
        <position position="895"/>
    </location>
    <ligand>
        <name>Zn(2+)</name>
        <dbReference type="ChEBI" id="CHEBI:29105"/>
        <label>2</label>
    </ligand>
</feature>
<feature type="binding site" evidence="1">
    <location>
        <position position="898"/>
    </location>
    <ligand>
        <name>Zn(2+)</name>
        <dbReference type="ChEBI" id="CHEBI:29105"/>
        <label>2</label>
    </ligand>
</feature>
<feature type="strand" evidence="3">
    <location>
        <begin position="20"/>
        <end position="24"/>
    </location>
</feature>
<feature type="helix" evidence="3">
    <location>
        <begin position="27"/>
        <end position="33"/>
    </location>
</feature>
<feature type="strand" evidence="3">
    <location>
        <begin position="34"/>
        <end position="37"/>
    </location>
</feature>
<feature type="strand" evidence="3">
    <location>
        <begin position="46"/>
        <end position="48"/>
    </location>
</feature>
<feature type="strand" evidence="3">
    <location>
        <begin position="55"/>
        <end position="57"/>
    </location>
</feature>
<feature type="turn" evidence="3">
    <location>
        <begin position="59"/>
        <end position="61"/>
    </location>
</feature>
<feature type="strand" evidence="3">
    <location>
        <begin position="86"/>
        <end position="88"/>
    </location>
</feature>
<feature type="helix" evidence="3">
    <location>
        <begin position="97"/>
        <end position="99"/>
    </location>
</feature>
<feature type="strand" evidence="3">
    <location>
        <begin position="102"/>
        <end position="112"/>
    </location>
</feature>
<feature type="turn" evidence="3">
    <location>
        <begin position="115"/>
        <end position="117"/>
    </location>
</feature>
<feature type="strand" evidence="3">
    <location>
        <begin position="118"/>
        <end position="121"/>
    </location>
</feature>
<feature type="helix" evidence="3">
    <location>
        <begin position="125"/>
        <end position="128"/>
    </location>
</feature>
<feature type="helix" evidence="3">
    <location>
        <begin position="132"/>
        <end position="138"/>
    </location>
</feature>
<feature type="turn" evidence="3">
    <location>
        <begin position="139"/>
        <end position="141"/>
    </location>
</feature>
<feature type="strand" evidence="3">
    <location>
        <begin position="142"/>
        <end position="148"/>
    </location>
</feature>
<feature type="strand" evidence="3">
    <location>
        <begin position="152"/>
        <end position="154"/>
    </location>
</feature>
<feature type="turn" evidence="3">
    <location>
        <begin position="162"/>
        <end position="164"/>
    </location>
</feature>
<feature type="helix" evidence="3">
    <location>
        <begin position="168"/>
        <end position="171"/>
    </location>
</feature>
<feature type="strand" evidence="4">
    <location>
        <begin position="177"/>
        <end position="179"/>
    </location>
</feature>
<feature type="helix" evidence="3">
    <location>
        <begin position="182"/>
        <end position="188"/>
    </location>
</feature>
<feature type="turn" evidence="3">
    <location>
        <begin position="189"/>
        <end position="191"/>
    </location>
</feature>
<feature type="helix" evidence="3">
    <location>
        <begin position="194"/>
        <end position="202"/>
    </location>
</feature>
<feature type="turn" evidence="3">
    <location>
        <begin position="203"/>
        <end position="207"/>
    </location>
</feature>
<feature type="helix" evidence="3">
    <location>
        <begin position="211"/>
        <end position="229"/>
    </location>
</feature>
<feature type="helix" evidence="3">
    <location>
        <begin position="234"/>
        <end position="237"/>
    </location>
</feature>
<feature type="strand" evidence="3">
    <location>
        <begin position="238"/>
        <end position="244"/>
    </location>
</feature>
<feature type="helix" evidence="3">
    <location>
        <begin position="247"/>
        <end position="249"/>
    </location>
</feature>
<feature type="turn" evidence="4">
    <location>
        <begin position="256"/>
        <end position="258"/>
    </location>
</feature>
<feature type="strand" evidence="3">
    <location>
        <begin position="260"/>
        <end position="262"/>
    </location>
</feature>
<feature type="helix" evidence="3">
    <location>
        <begin position="266"/>
        <end position="283"/>
    </location>
</feature>
<feature type="turn" evidence="3">
    <location>
        <begin position="284"/>
        <end position="286"/>
    </location>
</feature>
<feature type="helix" evidence="3">
    <location>
        <begin position="289"/>
        <end position="307"/>
    </location>
</feature>
<feature type="strand" evidence="3">
    <location>
        <begin position="309"/>
        <end position="313"/>
    </location>
</feature>
<feature type="strand" evidence="4">
    <location>
        <begin position="321"/>
        <end position="323"/>
    </location>
</feature>
<feature type="helix" evidence="3">
    <location>
        <begin position="328"/>
        <end position="330"/>
    </location>
</feature>
<feature type="helix" evidence="3">
    <location>
        <begin position="337"/>
        <end position="340"/>
    </location>
</feature>
<feature type="turn" evidence="3">
    <location>
        <begin position="341"/>
        <end position="343"/>
    </location>
</feature>
<feature type="strand" evidence="3">
    <location>
        <begin position="346"/>
        <end position="357"/>
    </location>
</feature>
<feature type="strand" evidence="3">
    <location>
        <begin position="365"/>
        <end position="369"/>
    </location>
</feature>
<feature type="helix" evidence="3">
    <location>
        <begin position="370"/>
        <end position="376"/>
    </location>
</feature>
<feature type="helix" evidence="3">
    <location>
        <begin position="378"/>
        <end position="387"/>
    </location>
</feature>
<feature type="helix" evidence="3">
    <location>
        <begin position="394"/>
        <end position="402"/>
    </location>
</feature>
<feature type="helix" evidence="3">
    <location>
        <begin position="406"/>
        <end position="415"/>
    </location>
</feature>
<feature type="strand" evidence="3">
    <location>
        <begin position="421"/>
        <end position="426"/>
    </location>
</feature>
<feature type="helix" evidence="3">
    <location>
        <begin position="431"/>
        <end position="433"/>
    </location>
</feature>
<feature type="strand" evidence="3">
    <location>
        <begin position="434"/>
        <end position="449"/>
    </location>
</feature>
<feature type="helix" evidence="4">
    <location>
        <begin position="451"/>
        <end position="453"/>
    </location>
</feature>
<feature type="helix" evidence="3">
    <location>
        <begin position="454"/>
        <end position="457"/>
    </location>
</feature>
<feature type="turn" evidence="3">
    <location>
        <begin position="461"/>
        <end position="463"/>
    </location>
</feature>
<feature type="strand" evidence="3">
    <location>
        <begin position="465"/>
        <end position="469"/>
    </location>
</feature>
<feature type="helix" evidence="3">
    <location>
        <begin position="474"/>
        <end position="482"/>
    </location>
</feature>
<feature type="turn" evidence="3">
    <location>
        <begin position="486"/>
        <end position="488"/>
    </location>
</feature>
<feature type="strand" evidence="3">
    <location>
        <begin position="493"/>
        <end position="500"/>
    </location>
</feature>
<feature type="helix" evidence="3">
    <location>
        <begin position="504"/>
        <end position="513"/>
    </location>
</feature>
<feature type="strand" evidence="4">
    <location>
        <begin position="517"/>
        <end position="519"/>
    </location>
</feature>
<feature type="strand" evidence="3">
    <location>
        <begin position="526"/>
        <end position="529"/>
    </location>
</feature>
<feature type="helix" evidence="3">
    <location>
        <begin position="530"/>
        <end position="538"/>
    </location>
</feature>
<feature type="strand" evidence="3">
    <location>
        <begin position="548"/>
        <end position="556"/>
    </location>
</feature>
<feature type="strand" evidence="3">
    <location>
        <begin position="564"/>
        <end position="572"/>
    </location>
</feature>
<feature type="helix" evidence="3">
    <location>
        <begin position="574"/>
        <end position="579"/>
    </location>
</feature>
<feature type="helix" evidence="4">
    <location>
        <begin position="589"/>
        <end position="591"/>
    </location>
</feature>
<feature type="strand" evidence="3">
    <location>
        <begin position="592"/>
        <end position="594"/>
    </location>
</feature>
<feature type="helix" evidence="3">
    <location>
        <begin position="598"/>
        <end position="611"/>
    </location>
</feature>
<feature type="helix" evidence="3">
    <location>
        <begin position="615"/>
        <end position="634"/>
    </location>
</feature>
<feature type="turn" evidence="4">
    <location>
        <begin position="641"/>
        <end position="643"/>
    </location>
</feature>
<feature type="helix" evidence="3">
    <location>
        <begin position="650"/>
        <end position="668"/>
    </location>
</feature>
<feature type="turn" evidence="3">
    <location>
        <begin position="669"/>
        <end position="671"/>
    </location>
</feature>
<feature type="helix" evidence="3">
    <location>
        <begin position="675"/>
        <end position="702"/>
    </location>
</feature>
<feature type="strand" evidence="3">
    <location>
        <begin position="709"/>
        <end position="711"/>
    </location>
</feature>
<feature type="helix" evidence="3">
    <location>
        <begin position="721"/>
        <end position="727"/>
    </location>
</feature>
<feature type="strand" evidence="4">
    <location>
        <begin position="729"/>
        <end position="731"/>
    </location>
</feature>
<feature type="helix" evidence="3">
    <location>
        <begin position="734"/>
        <end position="740"/>
    </location>
</feature>
<feature type="turn" evidence="3">
    <location>
        <begin position="763"/>
        <end position="765"/>
    </location>
</feature>
<feature type="helix" evidence="3">
    <location>
        <begin position="769"/>
        <end position="801"/>
    </location>
</feature>
<feature type="strand" evidence="3">
    <location>
        <begin position="804"/>
        <end position="806"/>
    </location>
</feature>
<feature type="strand" evidence="3">
    <location>
        <begin position="809"/>
        <end position="812"/>
    </location>
</feature>
<feature type="strand" evidence="3">
    <location>
        <begin position="820"/>
        <end position="822"/>
    </location>
</feature>
<feature type="strand" evidence="3">
    <location>
        <begin position="827"/>
        <end position="830"/>
    </location>
</feature>
<feature type="helix" evidence="3">
    <location>
        <begin position="835"/>
        <end position="838"/>
    </location>
</feature>
<feature type="strand" evidence="3">
    <location>
        <begin position="843"/>
        <end position="846"/>
    </location>
</feature>
<feature type="strand" evidence="3">
    <location>
        <begin position="851"/>
        <end position="854"/>
    </location>
</feature>
<feature type="strand" evidence="3">
    <location>
        <begin position="856"/>
        <end position="858"/>
    </location>
</feature>
<feature type="helix" evidence="3">
    <location>
        <begin position="866"/>
        <end position="874"/>
    </location>
</feature>
<feature type="strand" evidence="3">
    <location>
        <begin position="880"/>
        <end position="882"/>
    </location>
</feature>
<feature type="helix" evidence="3">
    <location>
        <begin position="885"/>
        <end position="887"/>
    </location>
</feature>
<feature type="strand" evidence="3">
    <location>
        <begin position="893"/>
        <end position="896"/>
    </location>
</feature>
<feature type="turn" evidence="3">
    <location>
        <begin position="897"/>
        <end position="899"/>
    </location>
</feature>
<feature type="strand" evidence="3">
    <location>
        <begin position="903"/>
        <end position="907"/>
    </location>
</feature>
<feature type="helix" evidence="3">
    <location>
        <begin position="915"/>
        <end position="924"/>
    </location>
</feature>
<feature type="helix" evidence="3">
    <location>
        <begin position="926"/>
        <end position="929"/>
    </location>
</feature>
<feature type="strand" evidence="3">
    <location>
        <begin position="949"/>
        <end position="951"/>
    </location>
</feature>
<feature type="strand" evidence="3">
    <location>
        <begin position="957"/>
        <end position="962"/>
    </location>
</feature>
<feature type="strand" evidence="3">
    <location>
        <begin position="965"/>
        <end position="967"/>
    </location>
</feature>
<feature type="strand" evidence="3">
    <location>
        <begin position="969"/>
        <end position="971"/>
    </location>
</feature>
<feature type="strand" evidence="3">
    <location>
        <begin position="973"/>
        <end position="975"/>
    </location>
</feature>
<feature type="strand" evidence="3">
    <location>
        <begin position="981"/>
        <end position="985"/>
    </location>
</feature>
<feature type="strand" evidence="3">
    <location>
        <begin position="987"/>
        <end position="989"/>
    </location>
</feature>
<feature type="strand" evidence="3">
    <location>
        <begin position="991"/>
        <end position="995"/>
    </location>
</feature>
<feature type="strand" evidence="3">
    <location>
        <begin position="1007"/>
        <end position="1010"/>
    </location>
</feature>
<feature type="strand" evidence="3">
    <location>
        <begin position="1015"/>
        <end position="1019"/>
    </location>
</feature>
<feature type="strand" evidence="3">
    <location>
        <begin position="1022"/>
        <end position="1025"/>
    </location>
</feature>
<feature type="strand" evidence="3">
    <location>
        <begin position="1036"/>
        <end position="1038"/>
    </location>
</feature>
<feature type="strand" evidence="3">
    <location>
        <begin position="1042"/>
        <end position="1046"/>
    </location>
</feature>
<feature type="helix" evidence="4">
    <location>
        <begin position="1052"/>
        <end position="1054"/>
    </location>
</feature>
<feature type="strand" evidence="3">
    <location>
        <begin position="1057"/>
        <end position="1061"/>
    </location>
</feature>
<feature type="turn" evidence="4">
    <location>
        <begin position="1064"/>
        <end position="1066"/>
    </location>
</feature>
<feature type="strand" evidence="3">
    <location>
        <begin position="1069"/>
        <end position="1073"/>
    </location>
</feature>
<feature type="strand" evidence="3">
    <location>
        <begin position="1077"/>
        <end position="1079"/>
    </location>
</feature>
<feature type="strand" evidence="3">
    <location>
        <begin position="1083"/>
        <end position="1085"/>
    </location>
</feature>
<feature type="strand" evidence="4">
    <location>
        <begin position="1093"/>
        <end position="1095"/>
    </location>
</feature>
<feature type="strand" evidence="4">
    <location>
        <begin position="1113"/>
        <end position="1115"/>
    </location>
</feature>
<feature type="helix" evidence="3">
    <location>
        <begin position="1138"/>
        <end position="1145"/>
    </location>
</feature>
<feature type="strand" evidence="3">
    <location>
        <begin position="1158"/>
        <end position="1163"/>
    </location>
</feature>
<feature type="strand" evidence="3">
    <location>
        <begin position="1168"/>
        <end position="1175"/>
    </location>
</feature>
<feature type="strand" evidence="3">
    <location>
        <begin position="1177"/>
        <end position="1183"/>
    </location>
</feature>
<feature type="strand" evidence="3">
    <location>
        <begin position="1188"/>
        <end position="1190"/>
    </location>
</feature>
<feature type="strand" evidence="3">
    <location>
        <begin position="1192"/>
        <end position="1194"/>
    </location>
</feature>
<feature type="strand" evidence="4">
    <location>
        <begin position="1200"/>
        <end position="1203"/>
    </location>
</feature>
<feature type="strand" evidence="4">
    <location>
        <begin position="1208"/>
        <end position="1211"/>
    </location>
</feature>
<feature type="helix" evidence="3">
    <location>
        <begin position="1219"/>
        <end position="1223"/>
    </location>
</feature>
<feature type="helix" evidence="3">
    <location>
        <begin position="1226"/>
        <end position="1241"/>
    </location>
</feature>
<feature type="turn" evidence="3">
    <location>
        <begin position="1242"/>
        <end position="1245"/>
    </location>
</feature>
<feature type="helix" evidence="3">
    <location>
        <begin position="1250"/>
        <end position="1260"/>
    </location>
</feature>
<feature type="strand" evidence="3">
    <location>
        <begin position="1263"/>
        <end position="1265"/>
    </location>
</feature>
<feature type="strand" evidence="3">
    <location>
        <begin position="1270"/>
        <end position="1276"/>
    </location>
</feature>
<feature type="strand" evidence="4">
    <location>
        <begin position="1277"/>
        <end position="1279"/>
    </location>
</feature>
<feature type="helix" evidence="3">
    <location>
        <begin position="1280"/>
        <end position="1291"/>
    </location>
</feature>
<feature type="strand" evidence="3">
    <location>
        <begin position="1292"/>
        <end position="1294"/>
    </location>
</feature>
<feature type="strand" evidence="4">
    <location>
        <begin position="1301"/>
        <end position="1304"/>
    </location>
</feature>
<feature type="helix" evidence="3">
    <location>
        <begin position="1311"/>
        <end position="1314"/>
    </location>
</feature>
<feature type="helix" evidence="3">
    <location>
        <begin position="1322"/>
        <end position="1325"/>
    </location>
</feature>
<feature type="helix" evidence="3">
    <location>
        <begin position="1328"/>
        <end position="1337"/>
    </location>
</feature>
<feature type="helix" evidence="3">
    <location>
        <begin position="1347"/>
        <end position="1353"/>
    </location>
</feature>
<feature type="helix" evidence="3">
    <location>
        <begin position="1360"/>
        <end position="1362"/>
    </location>
</feature>
<feature type="helix" evidence="3">
    <location>
        <begin position="1363"/>
        <end position="1373"/>
    </location>
</feature>
<gene>
    <name evidence="1" type="primary">rpoC</name>
    <name type="ordered locus">PA4269</name>
</gene>
<sequence>MKDLLNLLKNQGQIEEFDAIRIGLASPEMIRSWSFGEVKKPETINYRTFKPERDGLFCAKIFGPVKDYECLCGKYKRLKHRGVICEKCGVEVALAKVRRERMGHIELASPVAHIWFLKSLPSRIGLLLDMTLRDIERVLYFESYVVIDPGMTTLEKGQLLNDEQYFEALEEFGDDFDARMGAEAVHELLNAIDLEHEIGRLREEIPQTNSETKIKKLSKRLKLMEAFQGSGNKPEWMVLTVLPVLPPDLRPLVPLDGGRFATSDLNDLYRRVINRNNRLKRLLDLAAPDIIVRNEKRMLQEAVDALLDNGRRGRAITGSNKRPLKSLADMIKGKQGRFRQNLLGKRVDYSGRSVITVGPTLRLHQCGLPKKMALELFKPFIFGKLEGRGMATTIKAAKKMVERELPEVWDVLAEVIREHPVLLNRAPTLHRLGIQAFEPVLIEGKAIQLHPLVCAAYNADFDGDQMAVHVPLTLEAQLEARALMMSTNNILSPANGEPIIVPSQDVVMGLYYMTREAINAKGEGMAFADLQEVDRAYRSGQASLHARVKVRINEKIKGEDGQLTANTRIVDTTVGRALLFQVVPAGLPFDVVNQSMKKKAISKLINHCYRVVGLKDTVIFADQLMYTGFAYSTISGVSIGVNDFVIPDEKARIINAATDEVKEIESQYASGLVTQGEKYNKVIDLWSKANDEVSKAMMANLSKEKVVDREGKEVDQESFNSMYMMADSGARGSAAQIRQLAGMRGLMAKPDGSIIETPITANFREGLNVLQYFISTHGARKGLADTALKTANSGYLTRRLVDVAQDLVVTEIDCGTEHGLLMSPHIEGGDVVEPLGERVLGRVIARDVFKPGSDEVIVPAGTLIDEKWVDFLEVMSVDEVVVRSPITCETRHGICAMCYGRDLARGHRVNIGEAVGVIAAQSIGEPGTQLTMRTFHIGGAASRTSAADNVQVKNGGTIRLHNLKHVVRADGALVAVSRSGELAVADDFGRERERYKLPYGAVISVKEGDKVDPGAIVAKWDPHTHPIVTEVDGTVAFVGMEEGITVKRQTDELTGLTNIEVMDPKDRPAAGKDIRPAVKLIDAAGKDLLLPGTDVPAQYFLPANALVNLTDGAKVSIGDVVARIPQETSKTRDITGGLPRVADLFEARRPKEPSILAEISGTISFGKETKGKRRLVITPNDGSDPYEELIPKWRHLNVFEGEQVNRGEVISDGPSNPHDILRLLGVSSLAKYIVNEIQDVYRLQGVKINDKHIETILRQMLRKVEVSESGDSSFIKGDQVELTQVLEENEQLGTEDKFPAKYERVLLGITKASLSTESFISAASFQETTRVLTEAAVTGKRDFLRGLKENVVVGRLIPAGTGLAYHSERKRQRDLGKPQRVSASEAEAALTEALNSSGN</sequence>